<accession>P70994</accession>
<evidence type="ECO:0000250" key="1"/>
<evidence type="ECO:0000269" key="2">
    <source>
    </source>
</evidence>
<evidence type="ECO:0000305" key="3"/>
<evidence type="ECO:0000305" key="4">
    <source>
    </source>
</evidence>
<evidence type="ECO:0000305" key="5">
    <source ref="4"/>
</evidence>
<evidence type="ECO:0007829" key="6">
    <source>
        <dbReference type="PDB" id="2OPA"/>
    </source>
</evidence>
<feature type="initiator methionine" description="Removed" evidence="1">
    <location>
        <position position="1"/>
    </location>
</feature>
<feature type="chain" id="PRO_0000209523" description="2-hydroxymuconate tautomerase">
    <location>
        <begin position="2"/>
        <end position="62"/>
    </location>
</feature>
<feature type="active site" description="Proton acceptor; via imino nitrogen" evidence="2">
    <location>
        <position position="2"/>
    </location>
</feature>
<feature type="binding site">
    <location>
        <begin position="9"/>
        <end position="12"/>
    </location>
    <ligand>
        <name>substrate</name>
    </ligand>
</feature>
<feature type="mutagenesis site" description="Absence of tautomerase activity using 2-hydroxymuconate. For 2-hydroxy-2,4-pentadienoate and phenylenolpyruvate, a strong decrease of catalytic efficiency and a 2-fold decrease of affinity is observed." evidence="2">
    <original>P</original>
    <variation>A</variation>
    <location>
        <position position="2"/>
    </location>
</feature>
<feature type="mutagenesis site" description="Absence of tautomerase activity using 2-hydroxymuconate. For 2-hydroxy-2,4-pentadienoate and phenylenolpyruvate, a strong decrease of catalytic efficiency and a 2-fold decrease of affinity is observed." evidence="2">
    <original>R</original>
    <variation>A</variation>
    <location>
        <position position="12"/>
    </location>
</feature>
<feature type="strand" evidence="6">
    <location>
        <begin position="3"/>
        <end position="10"/>
    </location>
</feature>
<feature type="helix" evidence="6">
    <location>
        <begin position="14"/>
        <end position="32"/>
    </location>
</feature>
<feature type="helix" evidence="6">
    <location>
        <begin position="36"/>
        <end position="38"/>
    </location>
</feature>
<feature type="strand" evidence="6">
    <location>
        <begin position="40"/>
        <end position="46"/>
    </location>
</feature>
<feature type="helix" evidence="6">
    <location>
        <begin position="48"/>
        <end position="50"/>
    </location>
</feature>
<feature type="helix" evidence="6">
    <location>
        <begin position="58"/>
        <end position="60"/>
    </location>
</feature>
<dbReference type="EC" id="5.3.2.6"/>
<dbReference type="EMBL" id="Z80360">
    <property type="protein sequence ID" value="CAB02512.1"/>
    <property type="molecule type" value="Genomic_DNA"/>
</dbReference>
<dbReference type="EMBL" id="AL009126">
    <property type="protein sequence ID" value="CAB15781.1"/>
    <property type="molecule type" value="Genomic_DNA"/>
</dbReference>
<dbReference type="PIR" id="C70057">
    <property type="entry name" value="C70057"/>
</dbReference>
<dbReference type="RefSeq" id="WP_003222038.1">
    <property type="nucleotide sequence ID" value="NZ_OZ025638.1"/>
</dbReference>
<dbReference type="PDB" id="2OP8">
    <property type="method" value="X-ray"/>
    <property type="resolution" value="2.50 A"/>
    <property type="chains" value="A/B=2-62"/>
</dbReference>
<dbReference type="PDB" id="2OPA">
    <property type="method" value="X-ray"/>
    <property type="resolution" value="2.40 A"/>
    <property type="chains" value="A/B=2-62"/>
</dbReference>
<dbReference type="PDBsum" id="2OP8"/>
<dbReference type="PDBsum" id="2OPA"/>
<dbReference type="SMR" id="P70994"/>
<dbReference type="FunCoup" id="P70994">
    <property type="interactions" value="29"/>
</dbReference>
<dbReference type="STRING" id="224308.BSU37540"/>
<dbReference type="PaxDb" id="224308-BSU37540"/>
<dbReference type="EnsemblBacteria" id="CAB15781">
    <property type="protein sequence ID" value="CAB15781"/>
    <property type="gene ID" value="BSU_37540"/>
</dbReference>
<dbReference type="GeneID" id="937098"/>
<dbReference type="KEGG" id="bsu:BSU37540"/>
<dbReference type="PATRIC" id="fig|224308.179.peg.4065"/>
<dbReference type="eggNOG" id="COG1942">
    <property type="taxonomic scope" value="Bacteria"/>
</dbReference>
<dbReference type="InParanoid" id="P70994"/>
<dbReference type="OrthoDB" id="5405937at2"/>
<dbReference type="PhylomeDB" id="P70994"/>
<dbReference type="BioCyc" id="BSUB:BSU37540-MONOMER"/>
<dbReference type="BioCyc" id="MetaCyc:BSU37540-MONOMER"/>
<dbReference type="SABIO-RK" id="P70994"/>
<dbReference type="EvolutionaryTrace" id="P70994"/>
<dbReference type="PRO" id="PR:P70994"/>
<dbReference type="Proteomes" id="UP000001570">
    <property type="component" value="Chromosome"/>
</dbReference>
<dbReference type="GO" id="GO:0016853">
    <property type="term" value="F:isomerase activity"/>
    <property type="evidence" value="ECO:0000314"/>
    <property type="project" value="UniProtKB"/>
</dbReference>
<dbReference type="CDD" id="cd00491">
    <property type="entry name" value="4Oxalocrotonate_Tautomerase"/>
    <property type="match status" value="1"/>
</dbReference>
<dbReference type="FunFam" id="3.30.429.10:FF:000002">
    <property type="entry name" value="Tautomerase"/>
    <property type="match status" value="1"/>
</dbReference>
<dbReference type="Gene3D" id="3.30.429.10">
    <property type="entry name" value="Macrophage Migration Inhibitory Factor"/>
    <property type="match status" value="1"/>
</dbReference>
<dbReference type="InterPro" id="IPR018191">
    <property type="entry name" value="4-OT"/>
</dbReference>
<dbReference type="InterPro" id="IPR004370">
    <property type="entry name" value="4-OT-like_dom"/>
</dbReference>
<dbReference type="InterPro" id="IPR014347">
    <property type="entry name" value="Tautomerase/MIF_sf"/>
</dbReference>
<dbReference type="NCBIfam" id="NF002571">
    <property type="entry name" value="PRK02220.1"/>
    <property type="match status" value="1"/>
</dbReference>
<dbReference type="NCBIfam" id="TIGR00013">
    <property type="entry name" value="taut"/>
    <property type="match status" value="1"/>
</dbReference>
<dbReference type="PANTHER" id="PTHR35530:SF1">
    <property type="entry name" value="2-HYDROXYMUCONATE TAUTOMERASE"/>
    <property type="match status" value="1"/>
</dbReference>
<dbReference type="PANTHER" id="PTHR35530">
    <property type="entry name" value="TAUTOMERASE-RELATED"/>
    <property type="match status" value="1"/>
</dbReference>
<dbReference type="Pfam" id="PF01361">
    <property type="entry name" value="Tautomerase"/>
    <property type="match status" value="1"/>
</dbReference>
<dbReference type="SUPFAM" id="SSF55331">
    <property type="entry name" value="Tautomerase/MIF"/>
    <property type="match status" value="1"/>
</dbReference>
<reference key="1">
    <citation type="journal article" date="1997" name="Microbiology">
        <title>The Bacillus subtilis genome from gerBC (311 degrees) to licR (334 degrees).</title>
        <authorList>
            <person name="Presecan E."/>
            <person name="Moszer I."/>
            <person name="Boursier L."/>
            <person name="Cruz Ramos H."/>
            <person name="De La Fuente V."/>
            <person name="Hullo M.-F."/>
            <person name="Lelong C."/>
            <person name="Schleich S."/>
            <person name="Sekowska A."/>
            <person name="Song B.H."/>
            <person name="Villani G."/>
            <person name="Kunst F."/>
            <person name="Danchin A."/>
            <person name="Glaser P."/>
        </authorList>
    </citation>
    <scope>NUCLEOTIDE SEQUENCE [GENOMIC DNA]</scope>
    <source>
        <strain>168</strain>
    </source>
</reference>
<reference key="2">
    <citation type="journal article" date="1997" name="Nature">
        <title>The complete genome sequence of the Gram-positive bacterium Bacillus subtilis.</title>
        <authorList>
            <person name="Kunst F."/>
            <person name="Ogasawara N."/>
            <person name="Moszer I."/>
            <person name="Albertini A.M."/>
            <person name="Alloni G."/>
            <person name="Azevedo V."/>
            <person name="Bertero M.G."/>
            <person name="Bessieres P."/>
            <person name="Bolotin A."/>
            <person name="Borchert S."/>
            <person name="Borriss R."/>
            <person name="Boursier L."/>
            <person name="Brans A."/>
            <person name="Braun M."/>
            <person name="Brignell S.C."/>
            <person name="Bron S."/>
            <person name="Brouillet S."/>
            <person name="Bruschi C.V."/>
            <person name="Caldwell B."/>
            <person name="Capuano V."/>
            <person name="Carter N.M."/>
            <person name="Choi S.-K."/>
            <person name="Codani J.-J."/>
            <person name="Connerton I.F."/>
            <person name="Cummings N.J."/>
            <person name="Daniel R.A."/>
            <person name="Denizot F."/>
            <person name="Devine K.M."/>
            <person name="Duesterhoeft A."/>
            <person name="Ehrlich S.D."/>
            <person name="Emmerson P.T."/>
            <person name="Entian K.-D."/>
            <person name="Errington J."/>
            <person name="Fabret C."/>
            <person name="Ferrari E."/>
            <person name="Foulger D."/>
            <person name="Fritz C."/>
            <person name="Fujita M."/>
            <person name="Fujita Y."/>
            <person name="Fuma S."/>
            <person name="Galizzi A."/>
            <person name="Galleron N."/>
            <person name="Ghim S.-Y."/>
            <person name="Glaser P."/>
            <person name="Goffeau A."/>
            <person name="Golightly E.J."/>
            <person name="Grandi G."/>
            <person name="Guiseppi G."/>
            <person name="Guy B.J."/>
            <person name="Haga K."/>
            <person name="Haiech J."/>
            <person name="Harwood C.R."/>
            <person name="Henaut A."/>
            <person name="Hilbert H."/>
            <person name="Holsappel S."/>
            <person name="Hosono S."/>
            <person name="Hullo M.-F."/>
            <person name="Itaya M."/>
            <person name="Jones L.-M."/>
            <person name="Joris B."/>
            <person name="Karamata D."/>
            <person name="Kasahara Y."/>
            <person name="Klaerr-Blanchard M."/>
            <person name="Klein C."/>
            <person name="Kobayashi Y."/>
            <person name="Koetter P."/>
            <person name="Koningstein G."/>
            <person name="Krogh S."/>
            <person name="Kumano M."/>
            <person name="Kurita K."/>
            <person name="Lapidus A."/>
            <person name="Lardinois S."/>
            <person name="Lauber J."/>
            <person name="Lazarevic V."/>
            <person name="Lee S.-M."/>
            <person name="Levine A."/>
            <person name="Liu H."/>
            <person name="Masuda S."/>
            <person name="Mauel C."/>
            <person name="Medigue C."/>
            <person name="Medina N."/>
            <person name="Mellado R.P."/>
            <person name="Mizuno M."/>
            <person name="Moestl D."/>
            <person name="Nakai S."/>
            <person name="Noback M."/>
            <person name="Noone D."/>
            <person name="O'Reilly M."/>
            <person name="Ogawa K."/>
            <person name="Ogiwara A."/>
            <person name="Oudega B."/>
            <person name="Park S.-H."/>
            <person name="Parro V."/>
            <person name="Pohl T.M."/>
            <person name="Portetelle D."/>
            <person name="Porwollik S."/>
            <person name="Prescott A.M."/>
            <person name="Presecan E."/>
            <person name="Pujic P."/>
            <person name="Purnelle B."/>
            <person name="Rapoport G."/>
            <person name="Rey M."/>
            <person name="Reynolds S."/>
            <person name="Rieger M."/>
            <person name="Rivolta C."/>
            <person name="Rocha E."/>
            <person name="Roche B."/>
            <person name="Rose M."/>
            <person name="Sadaie Y."/>
            <person name="Sato T."/>
            <person name="Scanlan E."/>
            <person name="Schleich S."/>
            <person name="Schroeter R."/>
            <person name="Scoffone F."/>
            <person name="Sekiguchi J."/>
            <person name="Sekowska A."/>
            <person name="Seror S.J."/>
            <person name="Serror P."/>
            <person name="Shin B.-S."/>
            <person name="Soldo B."/>
            <person name="Sorokin A."/>
            <person name="Tacconi E."/>
            <person name="Takagi T."/>
            <person name="Takahashi H."/>
            <person name="Takemaru K."/>
            <person name="Takeuchi M."/>
            <person name="Tamakoshi A."/>
            <person name="Tanaka T."/>
            <person name="Terpstra P."/>
            <person name="Tognoni A."/>
            <person name="Tosato V."/>
            <person name="Uchiyama S."/>
            <person name="Vandenbol M."/>
            <person name="Vannier F."/>
            <person name="Vassarotti A."/>
            <person name="Viari A."/>
            <person name="Wambutt R."/>
            <person name="Wedler E."/>
            <person name="Wedler H."/>
            <person name="Weitzenegger T."/>
            <person name="Winters P."/>
            <person name="Wipat A."/>
            <person name="Yamamoto H."/>
            <person name="Yamane K."/>
            <person name="Yasumoto K."/>
            <person name="Yata K."/>
            <person name="Yoshida K."/>
            <person name="Yoshikawa H.-F."/>
            <person name="Zumstein E."/>
            <person name="Yoshikawa H."/>
            <person name="Danchin A."/>
        </authorList>
    </citation>
    <scope>NUCLEOTIDE SEQUENCE [LARGE SCALE GENOMIC DNA]</scope>
    <source>
        <strain>168</strain>
    </source>
</reference>
<reference key="3">
    <citation type="journal article" date="2007" name="Biochemistry">
        <title>Kinetic and stereochemical analysis of YwhB, a 4-oxalocrotonate tautomerase homologue in Bacillus subtilis: mechanistic implications for the YwhB- and 4-oxalocrotonate tautomerase-catalyzed reactions.</title>
        <authorList>
            <person name="Wang S.C."/>
            <person name="Johnson W.H. Jr."/>
            <person name="Czerwinski R.M."/>
            <person name="Stamps S.L."/>
            <person name="Whitman C.P."/>
        </authorList>
    </citation>
    <scope>FUNCTION</scope>
    <scope>CATALYTIC ACTIVITY</scope>
    <scope>ACTIVE SITE</scope>
    <scope>MUTAGENESIS OF PRO-2 AND ARG-12</scope>
    <scope>BIOPHYSICOCHEMICAL PROPERTIES</scope>
    <scope>REACTION MECHANISM</scope>
    <scope>SUBSTRATE SPECIFICITY</scope>
</reference>
<reference key="4">
    <citation type="submission" date="2007-01" db="PDB data bank">
        <title>Ywhb binary complex with 2-fluoro-p-hydroxycinnamate.</title>
        <authorList>
            <person name="Hackert M.L."/>
            <person name="Whitman C.P."/>
            <person name="Almrud J.J."/>
        </authorList>
    </citation>
    <scope>X-RAY CRYSTALLOGRAPHY (2.4 ANGSTROMS) IN COMPLEX WITH SUBSTRATE ANALOG</scope>
    <scope>SUBUNIT</scope>
</reference>
<keyword id="KW-0002">3D-structure</keyword>
<keyword id="KW-0413">Isomerase</keyword>
<keyword id="KW-1185">Reference proteome</keyword>
<sequence length="62" mass="7145">MPYVTVKMLEGRTDEQKRNLVEKVTEAVKETTGASEEKIVVFIEEMRKDHYAVAGKRLSDME</sequence>
<protein>
    <recommendedName>
        <fullName>2-hydroxymuconate tautomerase</fullName>
        <ecNumber>5.3.2.6</ecNumber>
    </recommendedName>
    <alternativeName>
        <fullName>(2Z,4E)-2-hydroxyhexa-2,4-dienedioate keto-enol isomerase</fullName>
    </alternativeName>
    <alternativeName>
        <fullName>4-oxalocrotonate tautomerase</fullName>
        <shortName>4-OT</shortName>
    </alternativeName>
</protein>
<name>4OT_BACSU</name>
<proteinExistence type="evidence at protein level"/>
<organism>
    <name type="scientific">Bacillus subtilis (strain 168)</name>
    <dbReference type="NCBI Taxonomy" id="224308"/>
    <lineage>
        <taxon>Bacteria</taxon>
        <taxon>Bacillati</taxon>
        <taxon>Bacillota</taxon>
        <taxon>Bacilli</taxon>
        <taxon>Bacillales</taxon>
        <taxon>Bacillaceae</taxon>
        <taxon>Bacillus</taxon>
    </lineage>
</organism>
<comment type="function">
    <text evidence="2">Catalyzes both 1,3- and 1,5-keto-enol tautomerization of the diacid 2-hydroxymuconate (2-hydroxy-2,4-hexadienedioate) to produce 2-oxo-4-hexenedioate. This reaction is highly stereoselective and produces a mixture of stereoisomers, where the (3S)-isomer of 2-oxo-4-hexenedioate predominates. Also catalyzes the tautomerization of 2-hydroxymuconate to 2-oxo-3-hexenedioate, however this reaction is slower and occurs after the tautomerization of 2-hydroxymuconate to 2-oxo-4-hexenedioate. Using 2-hydroxy-2,4-pentadienoate, phenylenolpyruvate, (p-hydroxyphenyl)-enolpyruvate and 2-hydroxy-2,4-heptadiene-1,7-dioate, YwhB is a highly efficient 1,3-keto-enol tautomerase, but clearly not a 1,5-keto-enol tautomerase. Tautomerization of the two monoacids 2-hydroxy-2,4-pentadienoate and phenylenolpyruvate produces a mixture of stereoisomers, where the (3R)-isomers predominate.</text>
</comment>
<comment type="catalytic activity">
    <reaction evidence="2">
        <text>(2Z,4E)-2-hydroxyhexa-2,4-dienedioate = (3E)-2-oxohex-3-enedioate</text>
        <dbReference type="Rhea" id="RHEA:33431"/>
        <dbReference type="ChEBI" id="CHEBI:28080"/>
        <dbReference type="ChEBI" id="CHEBI:64908"/>
        <dbReference type="EC" id="5.3.2.6"/>
    </reaction>
</comment>
<comment type="biophysicochemical properties">
    <kinetics>
        <KM evidence="2">76 uM for 2-hydroxymuconate (with 2-oxo-4-hexenedioate as product)</KM>
        <KM evidence="2">160 uM for (p-hydroxyphenyl)-enolpyruvate</KM>
        <KM evidence="2">243 uM for 2-hydroxy-2,4-pentadienoate</KM>
        <KM evidence="2">300 uM for phenylenolpyruvate</KM>
        <KM evidence="2">330 uM for 2-hydroxy-2,4-heptadiene-1,7-dioate</KM>
        <KM evidence="2">940 uM for 2-hydroxymuconate (with 2-oxo-3-hexenedioate as product)</KM>
        <text>kcat is 3 sec(-1) for 2-hydroxy-2,4-heptadiene-1,7-dioate, 4.1 sec(-1) for (p-hydroxyphenyl)-enolpyruvate, 10 sec(-1) for 2-hydroxymuconate, 26 sec(-1) for 2-hydroxymuconate, 112 sec(-1) for 2-hydroxy-2,4-pentadienoate, 125 sec(-1) for phenylenolpyruvate.</text>
    </kinetics>
</comment>
<comment type="subunit">
    <text evidence="5">Homohexamer.</text>
</comment>
<comment type="miscellaneous">
    <text evidence="4">The mono- and diacids apparently bind in different orientations in the active site of YwhB, but the highly stereoselective nature of the YwhB reaction using a diacid suggests that the biological substrate for YwhB may be a diacid.</text>
</comment>
<comment type="similarity">
    <text evidence="3">Belongs to the 4-oxalocrotonate tautomerase family.</text>
</comment>
<gene>
    <name type="primary">ywhB</name>
    <name type="ordered locus">BSU37540</name>
</gene>